<protein>
    <recommendedName>
        <fullName>Protein disulfide-isomerase A2</fullName>
        <ecNumber>5.3.4.1</ecNumber>
    </recommendedName>
    <alternativeName>
        <fullName>Pancreas-specific protein disulfide isomerase</fullName>
        <shortName>PDIp</shortName>
    </alternativeName>
</protein>
<keyword id="KW-0025">Alternative splicing</keyword>
<keyword id="KW-0143">Chaperone</keyword>
<keyword id="KW-1015">Disulfide bond</keyword>
<keyword id="KW-0256">Endoplasmic reticulum</keyword>
<keyword id="KW-0325">Glycoprotein</keyword>
<keyword id="KW-0413">Isomerase</keyword>
<keyword id="KW-0446">Lipid-binding</keyword>
<keyword id="KW-1267">Proteomics identification</keyword>
<keyword id="KW-0676">Redox-active center</keyword>
<keyword id="KW-1185">Reference proteome</keyword>
<keyword id="KW-0677">Repeat</keyword>
<keyword id="KW-0732">Signal</keyword>
<keyword id="KW-0754">Steroid-binding</keyword>
<sequence>MSRQLLPVLLLLLLRASCPWGQEQGARSPSEEPPEEEIPKEDGILVLSRHTLGLALREHPALLVEFYAPWCGHCQALAPEYSKAAAVLAAESMVVTLAKVDGPAQRELAEEFGVTEYPTLKFFRNGNRTHPEEYTGPRDAEGIAEWLRRRVGPSAMRLEDEAAAQALIGGRDLVVIGFFQDLQDEDVATFLALAQDALDMTFGLTDRPRLFQQFGLTKDTVVLFKKFDEGRADFPVDEELGLDLGDLSRFLVTHSMRLVTEFNSQTSAKIFAARILNHLLLFVNQTLAAHRELLAGFGEAAPRFRGQVLFVVVDVAADNEHVLQYFGLKAEAAPTLRLVNLETTKKYAPVDGGPVTAASITAFCHAVLNGQVKPYLLSQEIPPDWDQRPVKTLVGKNFEQVAFDETKNVFVKFYAPWCTHCKEMAPAWEALAEKYQDHEDIIIAELDATANELDAFAVHGFPTLKYFPAGPGRKVIEYKSTRDLETFSKFLDNGGVLPTEEPPEEPAAPFPEPPANSTMGSKEEL</sequence>
<proteinExistence type="evidence at protein level"/>
<name>PDIA2_HUMAN</name>
<reference key="1">
    <citation type="submission" date="2003-11" db="EMBL/GenBank/DDBJ databases">
        <title>A human polycistronic mRNA composed of ARHGDIG and PDIP.</title>
        <authorList>
            <person name="Hayashi A."/>
            <person name="Tabata Y."/>
            <person name="Sato S."/>
            <person name="Mitsuyama M."/>
            <person name="Kanai S."/>
            <person name="Furuya T."/>
            <person name="Saito T."/>
        </authorList>
    </citation>
    <scope>NUCLEOTIDE SEQUENCE [MRNA] (ISOFORM 1)</scope>
    <scope>VARIANT SER-502</scope>
</reference>
<reference key="2">
    <citation type="journal article" date="2001" name="Hum. Mol. Genet.">
        <title>Sequence, structure and pathology of the fully annotated terminal 2 Mb of the short arm of human chromosome 16.</title>
        <authorList>
            <person name="Daniels R.J."/>
            <person name="Peden J.F."/>
            <person name="Lloyd C."/>
            <person name="Horsley S.W."/>
            <person name="Clark K."/>
            <person name="Tufarelli C."/>
            <person name="Kearney L."/>
            <person name="Buckle V.J."/>
            <person name="Doggett N.A."/>
            <person name="Flint J."/>
            <person name="Higgs D.R."/>
        </authorList>
    </citation>
    <scope>NUCLEOTIDE SEQUENCE [LARGE SCALE GENOMIC DNA]</scope>
</reference>
<reference key="3">
    <citation type="journal article" date="2004" name="Nature">
        <title>The sequence and analysis of duplication-rich human chromosome 16.</title>
        <authorList>
            <person name="Martin J."/>
            <person name="Han C."/>
            <person name="Gordon L.A."/>
            <person name="Terry A."/>
            <person name="Prabhakar S."/>
            <person name="She X."/>
            <person name="Xie G."/>
            <person name="Hellsten U."/>
            <person name="Chan Y.M."/>
            <person name="Altherr M."/>
            <person name="Couronne O."/>
            <person name="Aerts A."/>
            <person name="Bajorek E."/>
            <person name="Black S."/>
            <person name="Blumer H."/>
            <person name="Branscomb E."/>
            <person name="Brown N.C."/>
            <person name="Bruno W.J."/>
            <person name="Buckingham J.M."/>
            <person name="Callen D.F."/>
            <person name="Campbell C.S."/>
            <person name="Campbell M.L."/>
            <person name="Campbell E.W."/>
            <person name="Caoile C."/>
            <person name="Challacombe J.F."/>
            <person name="Chasteen L.A."/>
            <person name="Chertkov O."/>
            <person name="Chi H.C."/>
            <person name="Christensen M."/>
            <person name="Clark L.M."/>
            <person name="Cohn J.D."/>
            <person name="Denys M."/>
            <person name="Detter J.C."/>
            <person name="Dickson M."/>
            <person name="Dimitrijevic-Bussod M."/>
            <person name="Escobar J."/>
            <person name="Fawcett J.J."/>
            <person name="Flowers D."/>
            <person name="Fotopulos D."/>
            <person name="Glavina T."/>
            <person name="Gomez M."/>
            <person name="Gonzales E."/>
            <person name="Goodstein D."/>
            <person name="Goodwin L.A."/>
            <person name="Grady D.L."/>
            <person name="Grigoriev I."/>
            <person name="Groza M."/>
            <person name="Hammon N."/>
            <person name="Hawkins T."/>
            <person name="Haydu L."/>
            <person name="Hildebrand C.E."/>
            <person name="Huang W."/>
            <person name="Israni S."/>
            <person name="Jett J."/>
            <person name="Jewett P.B."/>
            <person name="Kadner K."/>
            <person name="Kimball H."/>
            <person name="Kobayashi A."/>
            <person name="Krawczyk M.-C."/>
            <person name="Leyba T."/>
            <person name="Longmire J.L."/>
            <person name="Lopez F."/>
            <person name="Lou Y."/>
            <person name="Lowry S."/>
            <person name="Ludeman T."/>
            <person name="Manohar C.F."/>
            <person name="Mark G.A."/>
            <person name="McMurray K.L."/>
            <person name="Meincke L.J."/>
            <person name="Morgan J."/>
            <person name="Moyzis R.K."/>
            <person name="Mundt M.O."/>
            <person name="Munk A.C."/>
            <person name="Nandkeshwar R.D."/>
            <person name="Pitluck S."/>
            <person name="Pollard M."/>
            <person name="Predki P."/>
            <person name="Parson-Quintana B."/>
            <person name="Ramirez L."/>
            <person name="Rash S."/>
            <person name="Retterer J."/>
            <person name="Ricke D.O."/>
            <person name="Robinson D.L."/>
            <person name="Rodriguez A."/>
            <person name="Salamov A."/>
            <person name="Saunders E.H."/>
            <person name="Scott D."/>
            <person name="Shough T."/>
            <person name="Stallings R.L."/>
            <person name="Stalvey M."/>
            <person name="Sutherland R.D."/>
            <person name="Tapia R."/>
            <person name="Tesmer J.G."/>
            <person name="Thayer N."/>
            <person name="Thompson L.S."/>
            <person name="Tice H."/>
            <person name="Torney D.C."/>
            <person name="Tran-Gyamfi M."/>
            <person name="Tsai M."/>
            <person name="Ulanovsky L.E."/>
            <person name="Ustaszewska A."/>
            <person name="Vo N."/>
            <person name="White P.S."/>
            <person name="Williams A.L."/>
            <person name="Wills P.L."/>
            <person name="Wu J.-R."/>
            <person name="Wu K."/>
            <person name="Yang J."/>
            <person name="DeJong P."/>
            <person name="Bruce D."/>
            <person name="Doggett N.A."/>
            <person name="Deaven L."/>
            <person name="Schmutz J."/>
            <person name="Grimwood J."/>
            <person name="Richardson P."/>
            <person name="Rokhsar D.S."/>
            <person name="Eichler E.E."/>
            <person name="Gilna P."/>
            <person name="Lucas S.M."/>
            <person name="Myers R.M."/>
            <person name="Rubin E.M."/>
            <person name="Pennacchio L.A."/>
        </authorList>
    </citation>
    <scope>NUCLEOTIDE SEQUENCE [LARGE SCALE GENOMIC DNA]</scope>
</reference>
<reference key="4">
    <citation type="submission" date="2005-09" db="EMBL/GenBank/DDBJ databases">
        <authorList>
            <person name="Mural R.J."/>
            <person name="Istrail S."/>
            <person name="Sutton G.G."/>
            <person name="Florea L."/>
            <person name="Halpern A.L."/>
            <person name="Mobarry C.M."/>
            <person name="Lippert R."/>
            <person name="Walenz B."/>
            <person name="Shatkay H."/>
            <person name="Dew I."/>
            <person name="Miller J.R."/>
            <person name="Flanigan M.J."/>
            <person name="Edwards N.J."/>
            <person name="Bolanos R."/>
            <person name="Fasulo D."/>
            <person name="Halldorsson B.V."/>
            <person name="Hannenhalli S."/>
            <person name="Turner R."/>
            <person name="Yooseph S."/>
            <person name="Lu F."/>
            <person name="Nusskern D.R."/>
            <person name="Shue B.C."/>
            <person name="Zheng X.H."/>
            <person name="Zhong F."/>
            <person name="Delcher A.L."/>
            <person name="Huson D.H."/>
            <person name="Kravitz S.A."/>
            <person name="Mouchard L."/>
            <person name="Reinert K."/>
            <person name="Remington K.A."/>
            <person name="Clark A.G."/>
            <person name="Waterman M.S."/>
            <person name="Eichler E.E."/>
            <person name="Adams M.D."/>
            <person name="Hunkapiller M.W."/>
            <person name="Myers E.W."/>
            <person name="Venter J.C."/>
        </authorList>
    </citation>
    <scope>NUCLEOTIDE SEQUENCE [LARGE SCALE GENOMIC DNA]</scope>
</reference>
<reference key="5">
    <citation type="journal article" date="2004" name="Genome Res.">
        <title>The status, quality, and expansion of the NIH full-length cDNA project: the Mammalian Gene Collection (MGC).</title>
        <authorList>
            <consortium name="The MGC Project Team"/>
        </authorList>
    </citation>
    <scope>NUCLEOTIDE SEQUENCE [LARGE SCALE MRNA] OF 6-525 (ISOFORM 1)</scope>
    <scope>VARIANT SER-502</scope>
    <source>
        <tissue>Brain</tissue>
    </source>
</reference>
<reference key="6">
    <citation type="journal article" date="1996" name="DNA Cell Biol.">
        <title>Characterization and chromosomal localization of a new protein disulfide isomerase, PDIp, highly expressed in human pancreas.</title>
        <authorList>
            <person name="Desilva M.G."/>
            <person name="Lu J."/>
            <person name="Donadel G."/>
            <person name="Modi W.S."/>
            <person name="Xie H."/>
            <person name="Notkins A.L."/>
            <person name="Lan M.S."/>
        </authorList>
    </citation>
    <scope>NUCLEOTIDE SEQUENCE [MRNA] OF 16-525 (ISOFORM 1)</scope>
    <scope>TISSUE SPECIFICITY</scope>
    <scope>VARIANT SER-502</scope>
    <source>
        <tissue>Pancreas</tissue>
    </source>
</reference>
<reference key="7">
    <citation type="journal article" date="2004" name="Nat. Genet.">
        <title>Complete sequencing and characterization of 21,243 full-length human cDNAs.</title>
        <authorList>
            <person name="Ota T."/>
            <person name="Suzuki Y."/>
            <person name="Nishikawa T."/>
            <person name="Otsuki T."/>
            <person name="Sugiyama T."/>
            <person name="Irie R."/>
            <person name="Wakamatsu A."/>
            <person name="Hayashi K."/>
            <person name="Sato H."/>
            <person name="Nagai K."/>
            <person name="Kimura K."/>
            <person name="Makita H."/>
            <person name="Sekine M."/>
            <person name="Obayashi M."/>
            <person name="Nishi T."/>
            <person name="Shibahara T."/>
            <person name="Tanaka T."/>
            <person name="Ishii S."/>
            <person name="Yamamoto J."/>
            <person name="Saito K."/>
            <person name="Kawai Y."/>
            <person name="Isono Y."/>
            <person name="Nakamura Y."/>
            <person name="Nagahari K."/>
            <person name="Murakami K."/>
            <person name="Yasuda T."/>
            <person name="Iwayanagi T."/>
            <person name="Wagatsuma M."/>
            <person name="Shiratori A."/>
            <person name="Sudo H."/>
            <person name="Hosoiri T."/>
            <person name="Kaku Y."/>
            <person name="Kodaira H."/>
            <person name="Kondo H."/>
            <person name="Sugawara M."/>
            <person name="Takahashi M."/>
            <person name="Kanda K."/>
            <person name="Yokoi T."/>
            <person name="Furuya T."/>
            <person name="Kikkawa E."/>
            <person name="Omura Y."/>
            <person name="Abe K."/>
            <person name="Kamihara K."/>
            <person name="Katsuta N."/>
            <person name="Sato K."/>
            <person name="Tanikawa M."/>
            <person name="Yamazaki M."/>
            <person name="Ninomiya K."/>
            <person name="Ishibashi T."/>
            <person name="Yamashita H."/>
            <person name="Murakawa K."/>
            <person name="Fujimori K."/>
            <person name="Tanai H."/>
            <person name="Kimata M."/>
            <person name="Watanabe M."/>
            <person name="Hiraoka S."/>
            <person name="Chiba Y."/>
            <person name="Ishida S."/>
            <person name="Ono Y."/>
            <person name="Takiguchi S."/>
            <person name="Watanabe S."/>
            <person name="Yosida M."/>
            <person name="Hotuta T."/>
            <person name="Kusano J."/>
            <person name="Kanehori K."/>
            <person name="Takahashi-Fujii A."/>
            <person name="Hara H."/>
            <person name="Tanase T.-O."/>
            <person name="Nomura Y."/>
            <person name="Togiya S."/>
            <person name="Komai F."/>
            <person name="Hara R."/>
            <person name="Takeuchi K."/>
            <person name="Arita M."/>
            <person name="Imose N."/>
            <person name="Musashino K."/>
            <person name="Yuuki H."/>
            <person name="Oshima A."/>
            <person name="Sasaki N."/>
            <person name="Aotsuka S."/>
            <person name="Yoshikawa Y."/>
            <person name="Matsunawa H."/>
            <person name="Ichihara T."/>
            <person name="Shiohata N."/>
            <person name="Sano S."/>
            <person name="Moriya S."/>
            <person name="Momiyama H."/>
            <person name="Satoh N."/>
            <person name="Takami S."/>
            <person name="Terashima Y."/>
            <person name="Suzuki O."/>
            <person name="Nakagawa S."/>
            <person name="Senoh A."/>
            <person name="Mizoguchi H."/>
            <person name="Goto Y."/>
            <person name="Shimizu F."/>
            <person name="Wakebe H."/>
            <person name="Hishigaki H."/>
            <person name="Watanabe T."/>
            <person name="Sugiyama A."/>
            <person name="Takemoto M."/>
            <person name="Kawakami B."/>
            <person name="Yamazaki M."/>
            <person name="Watanabe K."/>
            <person name="Kumagai A."/>
            <person name="Itakura S."/>
            <person name="Fukuzumi Y."/>
            <person name="Fujimori Y."/>
            <person name="Komiyama M."/>
            <person name="Tashiro H."/>
            <person name="Tanigami A."/>
            <person name="Fujiwara T."/>
            <person name="Ono T."/>
            <person name="Yamada K."/>
            <person name="Fujii Y."/>
            <person name="Ozaki K."/>
            <person name="Hirao M."/>
            <person name="Ohmori Y."/>
            <person name="Kawabata A."/>
            <person name="Hikiji T."/>
            <person name="Kobatake N."/>
            <person name="Inagaki H."/>
            <person name="Ikema Y."/>
            <person name="Okamoto S."/>
            <person name="Okitani R."/>
            <person name="Kawakami T."/>
            <person name="Noguchi S."/>
            <person name="Itoh T."/>
            <person name="Shigeta K."/>
            <person name="Senba T."/>
            <person name="Matsumura K."/>
            <person name="Nakajima Y."/>
            <person name="Mizuno T."/>
            <person name="Morinaga M."/>
            <person name="Sasaki M."/>
            <person name="Togashi T."/>
            <person name="Oyama M."/>
            <person name="Hata H."/>
            <person name="Watanabe M."/>
            <person name="Komatsu T."/>
            <person name="Mizushima-Sugano J."/>
            <person name="Satoh T."/>
            <person name="Shirai Y."/>
            <person name="Takahashi Y."/>
            <person name="Nakagawa K."/>
            <person name="Okumura K."/>
            <person name="Nagase T."/>
            <person name="Nomura N."/>
            <person name="Kikuchi H."/>
            <person name="Masuho Y."/>
            <person name="Yamashita R."/>
            <person name="Nakai K."/>
            <person name="Yada T."/>
            <person name="Nakamura Y."/>
            <person name="Ohara O."/>
            <person name="Isogai T."/>
            <person name="Sugano S."/>
        </authorList>
    </citation>
    <scope>NUCLEOTIDE SEQUENCE [LARGE SCALE MRNA] OF 20-525 (ISOFORM 1)</scope>
    <source>
        <tissue>Corpus callosum</tissue>
    </source>
</reference>
<reference key="8">
    <citation type="journal article" date="1997" name="DNA Cell Biol.">
        <title>Molecular characterization of a pancreas-specific protein disulfide isomerase, PDIp.</title>
        <authorList>
            <person name="Desilva M.G."/>
            <person name="Notkins A.L."/>
            <person name="Lan M.S."/>
        </authorList>
    </citation>
    <scope>TISSUE SPECIFICITY</scope>
    <scope>GLYCOSYLATION</scope>
</reference>
<reference key="9">
    <citation type="journal article" date="2002" name="Mol. Biol. Cell">
        <title>A subset of chaperones and folding enzymes form multiprotein complexes in endoplasmic reticulum to bind nascent proteins.</title>
        <authorList>
            <person name="Meunier L."/>
            <person name="Usherwood Y.-K."/>
            <person name="Chung K.T."/>
            <person name="Hendershot L.M."/>
        </authorList>
    </citation>
    <scope>COMPONENT OF A CHAPERONE COMPLEX</scope>
</reference>
<reference key="10">
    <citation type="journal article" date="2009" name="Arch. Biochem. Biophys.">
        <title>Human pancreas-specific protein disulfide isomerase homolog (PDIp) is redox-regulated through formation of an inter-subunit disulfide bond.</title>
        <authorList>
            <person name="Fu X."/>
            <person name="Zhu B.T."/>
        </authorList>
    </citation>
    <scope>FUNCTION</scope>
    <scope>SUBUNIT</scope>
    <scope>DISULFIDE BOND</scope>
    <scope>MUTAGENESIS OF CYS-18 AND CYS-364</scope>
</reference>
<reference key="11">
    <citation type="journal article" date="2009" name="J. Steroid Biochem. Mol. Biol.">
        <title>Human pancreas-specific protein disulfide isomerase homolog (PDIp) is an intracellular estrogen-binding protein that modulates estrogen levels and actions in target cells.</title>
        <authorList>
            <person name="Fu X.M."/>
            <person name="Zhu B.T."/>
        </authorList>
    </citation>
    <scope>FUNCTION</scope>
    <scope>TISSUE SPECIFICITY</scope>
</reference>
<reference key="12">
    <citation type="journal article" date="2013" name="FEBS J.">
        <title>N-linked glycosylation modulates dimerization of protein disulfide isomerase family A member 2 (PDIA2).</title>
        <authorList>
            <person name="Walker A.K."/>
            <person name="Soo K.Y."/>
            <person name="Levina V."/>
            <person name="Talbo G.H."/>
            <person name="Atkin J.D."/>
        </authorList>
    </citation>
    <scope>GLYCOSYLATION AT ASN-127; ASN-284 AND ASN-516</scope>
    <scope>MUTAGENESIS OF ASN-284</scope>
</reference>
<evidence type="ECO:0000250" key="1"/>
<evidence type="ECO:0000255" key="2"/>
<evidence type="ECO:0000255" key="3">
    <source>
        <dbReference type="PROSITE-ProRule" id="PRU00691"/>
    </source>
</evidence>
<evidence type="ECO:0000255" key="4">
    <source>
        <dbReference type="PROSITE-ProRule" id="PRU10138"/>
    </source>
</evidence>
<evidence type="ECO:0000256" key="5">
    <source>
        <dbReference type="SAM" id="MobiDB-lite"/>
    </source>
</evidence>
<evidence type="ECO:0000269" key="6">
    <source>
    </source>
</evidence>
<evidence type="ECO:0000269" key="7">
    <source>
    </source>
</evidence>
<evidence type="ECO:0000269" key="8">
    <source>
    </source>
</evidence>
<evidence type="ECO:0000269" key="9">
    <source>
    </source>
</evidence>
<evidence type="ECO:0000269" key="10">
    <source>
    </source>
</evidence>
<evidence type="ECO:0000269" key="11">
    <source>
    </source>
</evidence>
<evidence type="ECO:0000269" key="12">
    <source ref="1"/>
</evidence>
<evidence type="ECO:0000305" key="13"/>
<organism>
    <name type="scientific">Homo sapiens</name>
    <name type="common">Human</name>
    <dbReference type="NCBI Taxonomy" id="9606"/>
    <lineage>
        <taxon>Eukaryota</taxon>
        <taxon>Metazoa</taxon>
        <taxon>Chordata</taxon>
        <taxon>Craniata</taxon>
        <taxon>Vertebrata</taxon>
        <taxon>Euteleostomi</taxon>
        <taxon>Mammalia</taxon>
        <taxon>Eutheria</taxon>
        <taxon>Euarchontoglires</taxon>
        <taxon>Primates</taxon>
        <taxon>Haplorrhini</taxon>
        <taxon>Catarrhini</taxon>
        <taxon>Hominidae</taxon>
        <taxon>Homo</taxon>
    </lineage>
</organism>
<feature type="signal peptide" evidence="2">
    <location>
        <begin position="1"/>
        <end position="21"/>
    </location>
</feature>
<feature type="chain" id="PRO_0000034222" description="Protein disulfide-isomerase A2">
    <location>
        <begin position="22"/>
        <end position="525"/>
    </location>
</feature>
<feature type="domain" description="Thioredoxin 1" evidence="3">
    <location>
        <begin position="27"/>
        <end position="152"/>
    </location>
</feature>
<feature type="domain" description="Thioredoxin 2" evidence="3">
    <location>
        <begin position="367"/>
        <end position="496"/>
    </location>
</feature>
<feature type="region of interest" description="Disordered" evidence="5">
    <location>
        <begin position="492"/>
        <end position="525"/>
    </location>
</feature>
<feature type="short sequence motif" description="Prevents secretion from ER" evidence="4">
    <location>
        <begin position="522"/>
        <end position="525"/>
    </location>
</feature>
<feature type="compositionally biased region" description="Pro residues" evidence="5">
    <location>
        <begin position="505"/>
        <end position="514"/>
    </location>
</feature>
<feature type="compositionally biased region" description="Polar residues" evidence="5">
    <location>
        <begin position="516"/>
        <end position="525"/>
    </location>
</feature>
<feature type="active site" description="Nucleophile" evidence="1">
    <location>
        <position position="71"/>
    </location>
</feature>
<feature type="active site" description="Nucleophile" evidence="1">
    <location>
        <position position="74"/>
    </location>
</feature>
<feature type="active site" description="Nucleophile" evidence="1">
    <location>
        <position position="418"/>
    </location>
</feature>
<feature type="active site" description="Nucleophile" evidence="1">
    <location>
        <position position="421"/>
    </location>
</feature>
<feature type="site" description="Contributes to redox potential value" evidence="1">
    <location>
        <position position="72"/>
    </location>
</feature>
<feature type="site" description="Contributes to redox potential value" evidence="1">
    <location>
        <position position="73"/>
    </location>
</feature>
<feature type="site" description="Lowers pKa of C-terminal Cys of first active site" evidence="1">
    <location>
        <position position="138"/>
    </location>
</feature>
<feature type="site" description="Contributes to redox potential value" evidence="1">
    <location>
        <position position="419"/>
    </location>
</feature>
<feature type="site" description="Contributes to redox potential value" evidence="1">
    <location>
        <position position="420"/>
    </location>
</feature>
<feature type="site" description="Lowers pKa of C-terminal Cys of second active site" evidence="1">
    <location>
        <position position="482"/>
    </location>
</feature>
<feature type="glycosylation site" description="N-linked (GlcNAc...) asparagine" evidence="9">
    <location>
        <position position="127"/>
    </location>
</feature>
<feature type="glycosylation site" description="N-linked (GlcNAc...) asparagine" evidence="9">
    <location>
        <position position="284"/>
    </location>
</feature>
<feature type="glycosylation site" description="N-linked (GlcNAc...) asparagine" evidence="9">
    <location>
        <position position="516"/>
    </location>
</feature>
<feature type="disulfide bond" description="Interchain" evidence="7">
    <location>
        <position position="18"/>
    </location>
</feature>
<feature type="disulfide bond" description="Redox-active" evidence="3">
    <location>
        <begin position="71"/>
        <end position="74"/>
    </location>
</feature>
<feature type="disulfide bond" description="Redox-active" evidence="3">
    <location>
        <begin position="418"/>
        <end position="421"/>
    </location>
</feature>
<feature type="splice variant" id="VSP_039292" description="In isoform 2." evidence="13">
    <location>
        <begin position="181"/>
        <end position="183"/>
    </location>
</feature>
<feature type="sequence variant" id="VAR_048087" description="In dbSNP:rs45455191.">
    <original>P</original>
    <variation>S</variation>
    <location>
        <position position="39"/>
    </location>
</feature>
<feature type="sequence variant" id="VAR_048088" description="In dbSNP:rs45614840.">
    <original>T</original>
    <variation>R</variation>
    <location>
        <position position="119"/>
    </location>
</feature>
<feature type="sequence variant" id="VAR_048089" description="In dbSNP:rs419949.">
    <original>E</original>
    <variation>K</variation>
    <location>
        <position position="185"/>
    </location>
</feature>
<feature type="sequence variant" id="VAR_048090" description="In dbSNP:rs2685127.">
    <original>T</original>
    <variation>M</variation>
    <location>
        <position position="286"/>
    </location>
</feature>
<feature type="sequence variant" id="VAR_048091" description="In dbSNP:rs45529833.">
    <original>P</original>
    <variation>A</variation>
    <location>
        <position position="382"/>
    </location>
</feature>
<feature type="sequence variant" id="VAR_048092" description="In dbSNP:rs400037.">
    <original>R</original>
    <variation>Q</variation>
    <location>
        <position position="388"/>
    </location>
</feature>
<feature type="sequence variant" id="VAR_048093" description="In dbSNP:rs1048786." evidence="6 10 12">
    <original>P</original>
    <variation>S</variation>
    <location>
        <position position="502"/>
    </location>
</feature>
<feature type="mutagenesis site" description="Impairs interchain disulfide bridge formation." evidence="7">
    <original>C</original>
    <variation>A</variation>
    <location>
        <position position="18"/>
    </location>
</feature>
<feature type="mutagenesis site" description="Increases formation of a highly stable disulfide-bonded PDIA2 dimer." evidence="9">
    <original>N</original>
    <variation>Q</variation>
    <location>
        <position position="284"/>
    </location>
</feature>
<feature type="mutagenesis site" description="No effect on interchain disulfide bridge formation." evidence="7">
    <original>C</original>
    <variation>A</variation>
    <location>
        <position position="364"/>
    </location>
</feature>
<feature type="sequence conflict" description="In Ref. 7; BAG58339." evidence="13" ref="7">
    <original>T</original>
    <variation>M</variation>
    <location>
        <position position="96"/>
    </location>
</feature>
<feature type="sequence conflict" description="In Ref. 7; BAG58339." evidence="13" ref="7">
    <original>L</original>
    <variation>Q</variation>
    <location>
        <position position="484"/>
    </location>
</feature>
<gene>
    <name type="primary">PDIA2</name>
    <name type="synonym">PDIP</name>
</gene>
<accession>Q13087</accession>
<accession>A6ZJ64</accession>
<accession>B4DI27</accession>
<accession>Q2WGM4</accession>
<accession>Q4TT67</accession>
<accession>Q6B010</accession>
<accession>Q96KJ6</accession>
<accession>Q9BW95</accession>
<comment type="function">
    <text evidence="7 8">Acts as an intracellular estrogen-binding protein. May be involved in modulating cellular levels and biological functions of estrogens in the pancreas. May act as a chaperone that inhibits aggregation of misfolded proteins.</text>
</comment>
<comment type="catalytic activity">
    <reaction>
        <text>Catalyzes the rearrangement of -S-S- bonds in proteins.</text>
        <dbReference type="EC" id="5.3.4.1"/>
    </reaction>
</comment>
<comment type="subunit">
    <text evidence="7">Monomer; predominantly as monomer under reducing conditions. Homodimer; disulfide-linked. Part of a large chaperone multiprotein complex comprising DNAJB11, HSP90B1, HSPA5, HYOU, PDIA2, PDIA4, PDIA6, PPIB, SDF2L1, UGGT1 and very small amounts of ERP29, but not, or at very low levels, CALR nor CANX.</text>
</comment>
<comment type="interaction">
    <interactant intactId="EBI-1752525">
        <id>Q13087</id>
    </interactant>
    <interactant intactId="EBI-10210845">
        <id>P59990</id>
        <label>KRTAP12-1</label>
    </interactant>
    <organismsDiffer>false</organismsDiffer>
    <experiments>3</experiments>
</comment>
<comment type="interaction">
    <interactant intactId="EBI-1752525">
        <id>Q13087</id>
    </interactant>
    <interactant intactId="EBI-12111050">
        <id>Q3LI64</id>
        <label>KRTAP6-1</label>
    </interactant>
    <organismsDiffer>false</organismsDiffer>
    <experiments>3</experiments>
</comment>
<comment type="interaction">
    <interactant intactId="EBI-1752525">
        <id>Q13087</id>
    </interactant>
    <interactant intactId="EBI-389883">
        <id>P16333</id>
        <label>NCK1</label>
    </interactant>
    <organismsDiffer>false</organismsDiffer>
    <experiments>3</experiments>
</comment>
<comment type="subcellular location">
    <subcellularLocation>
        <location evidence="4">Endoplasmic reticulum lumen</location>
    </subcellularLocation>
</comment>
<comment type="alternative products">
    <event type="alternative splicing"/>
    <isoform>
        <id>Q13087-1</id>
        <name>1</name>
        <sequence type="displayed"/>
    </isoform>
    <isoform>
        <id>Q13087-2</id>
        <name>2</name>
        <sequence type="described" ref="VSP_039292"/>
    </isoform>
</comment>
<comment type="tissue specificity">
    <text evidence="8 10 11">Highly expressed in pancreas (at protein level).</text>
</comment>
<comment type="PTM">
    <text>The disulfide-linked homodimer exhibits an enhanced chaperone activity.</text>
</comment>
<comment type="PTM">
    <text evidence="9 11">Glycosylated.</text>
</comment>
<comment type="similarity">
    <text evidence="13">Belongs to the protein disulfide isomerase family.</text>
</comment>
<comment type="sequence caution" evidence="13">
    <conflict type="miscellaneous discrepancy">
        <sequence resource="EMBL-CDS" id="AAC50401"/>
    </conflict>
    <text>Contaminating sequence. Sequence of unknown origin in the N-terminal part.</text>
</comment>
<comment type="sequence caution" evidence="13">
    <conflict type="miscellaneous discrepancy">
        <sequence resource="EMBL-CDS" id="AAH75029"/>
    </conflict>
    <text>Contaminating sequence. Sequence of unknown origin in the N-terminal part.</text>
</comment>
<comment type="sequence caution" evidence="13">
    <conflict type="erroneous initiation">
        <sequence resource="EMBL-CDS" id="BAG58339"/>
    </conflict>
    <text>Truncated N-terminus.</text>
</comment>
<dbReference type="EC" id="5.3.4.1"/>
<dbReference type="EMBL" id="AB127078">
    <property type="protein sequence ID" value="BAE48734.1"/>
    <property type="molecule type" value="mRNA"/>
</dbReference>
<dbReference type="EMBL" id="AE006463">
    <property type="protein sequence ID" value="AAK61223.1"/>
    <property type="molecule type" value="Genomic_DNA"/>
</dbReference>
<dbReference type="EMBL" id="Z69667">
    <property type="protein sequence ID" value="CAI95586.1"/>
    <property type="molecule type" value="Genomic_DNA"/>
</dbReference>
<dbReference type="EMBL" id="Z69667">
    <property type="protein sequence ID" value="CAO78188.1"/>
    <property type="molecule type" value="Genomic_DNA"/>
</dbReference>
<dbReference type="EMBL" id="CH471112">
    <property type="protein sequence ID" value="EAW85838.1"/>
    <property type="molecule type" value="Genomic_DNA"/>
</dbReference>
<dbReference type="EMBL" id="BC000537">
    <property type="protein sequence ID" value="AAH00537.2"/>
    <property type="molecule type" value="mRNA"/>
</dbReference>
<dbReference type="EMBL" id="BC075029">
    <property type="protein sequence ID" value="AAH75029.1"/>
    <property type="status" value="ALT_SEQ"/>
    <property type="molecule type" value="mRNA"/>
</dbReference>
<dbReference type="EMBL" id="U19948">
    <property type="protein sequence ID" value="AAC50401.1"/>
    <property type="status" value="ALT_SEQ"/>
    <property type="molecule type" value="mRNA"/>
</dbReference>
<dbReference type="EMBL" id="AK295383">
    <property type="protein sequence ID" value="BAG58339.1"/>
    <property type="status" value="ALT_INIT"/>
    <property type="molecule type" value="mRNA"/>
</dbReference>
<dbReference type="CCDS" id="CCDS42089.1">
    <molecule id="Q13087-1"/>
</dbReference>
<dbReference type="RefSeq" id="NP_006840.2">
    <molecule id="Q13087-1"/>
    <property type="nucleotide sequence ID" value="NM_006849.4"/>
</dbReference>
<dbReference type="SMR" id="Q13087"/>
<dbReference type="BioGRID" id="122240">
    <property type="interactions" value="26"/>
</dbReference>
<dbReference type="FunCoup" id="Q13087">
    <property type="interactions" value="157"/>
</dbReference>
<dbReference type="IntAct" id="Q13087">
    <property type="interactions" value="12"/>
</dbReference>
<dbReference type="MINT" id="Q13087"/>
<dbReference type="STRING" id="9606.ENSP00000219406"/>
<dbReference type="ChEMBL" id="CHEMBL4739853"/>
<dbReference type="GlyConnect" id="1655">
    <property type="glycosylation" value="6 N-Linked glycans (1 site)"/>
</dbReference>
<dbReference type="GlyCosmos" id="Q13087">
    <property type="glycosylation" value="3 sites, 8 glycans"/>
</dbReference>
<dbReference type="GlyGen" id="Q13087">
    <property type="glycosylation" value="3 sites, 8 N-linked glycans (1 site)"/>
</dbReference>
<dbReference type="iPTMnet" id="Q13087"/>
<dbReference type="PhosphoSitePlus" id="Q13087"/>
<dbReference type="BioMuta" id="PDIA2"/>
<dbReference type="DMDM" id="21264492"/>
<dbReference type="jPOST" id="Q13087"/>
<dbReference type="MassIVE" id="Q13087"/>
<dbReference type="PaxDb" id="9606-ENSP00000219406"/>
<dbReference type="PeptideAtlas" id="Q13087"/>
<dbReference type="ProteomicsDB" id="59143">
    <molecule id="Q13087-1"/>
</dbReference>
<dbReference type="ProteomicsDB" id="59144">
    <molecule id="Q13087-2"/>
</dbReference>
<dbReference type="Antibodypedia" id="22619">
    <property type="antibodies" value="344 antibodies from 30 providers"/>
</dbReference>
<dbReference type="DNASU" id="64714"/>
<dbReference type="Ensembl" id="ENST00000219406.11">
    <molecule id="Q13087-1"/>
    <property type="protein sequence ID" value="ENSP00000219406.7"/>
    <property type="gene ID" value="ENSG00000185615.16"/>
</dbReference>
<dbReference type="Ensembl" id="ENST00000404312.5">
    <molecule id="Q13087-2"/>
    <property type="protein sequence ID" value="ENSP00000384410.1"/>
    <property type="gene ID" value="ENSG00000185615.16"/>
</dbReference>
<dbReference type="GeneID" id="64714"/>
<dbReference type="KEGG" id="hsa:64714"/>
<dbReference type="MANE-Select" id="ENST00000219406.11">
    <property type="protein sequence ID" value="ENSP00000219406.7"/>
    <property type="RefSeq nucleotide sequence ID" value="NM_006849.4"/>
    <property type="RefSeq protein sequence ID" value="NP_006840.2"/>
</dbReference>
<dbReference type="UCSC" id="uc002cgo.2">
    <molecule id="Q13087-1"/>
    <property type="organism name" value="human"/>
</dbReference>
<dbReference type="AGR" id="HGNC:14180"/>
<dbReference type="CTD" id="64714"/>
<dbReference type="DisGeNET" id="64714"/>
<dbReference type="GeneCards" id="PDIA2"/>
<dbReference type="HGNC" id="HGNC:14180">
    <property type="gene designation" value="PDIA2"/>
</dbReference>
<dbReference type="HPA" id="ENSG00000185615">
    <property type="expression patterns" value="Tissue enriched (pancreas)"/>
</dbReference>
<dbReference type="MIM" id="608012">
    <property type="type" value="gene"/>
</dbReference>
<dbReference type="neXtProt" id="NX_Q13087"/>
<dbReference type="OpenTargets" id="ENSG00000185615"/>
<dbReference type="PharmGKB" id="PA33153"/>
<dbReference type="VEuPathDB" id="HostDB:ENSG00000185615"/>
<dbReference type="eggNOG" id="KOG0190">
    <property type="taxonomic scope" value="Eukaryota"/>
</dbReference>
<dbReference type="GeneTree" id="ENSGT00940000161859"/>
<dbReference type="HOGENOM" id="CLU_025879_1_0_1"/>
<dbReference type="InParanoid" id="Q13087"/>
<dbReference type="OMA" id="REDYVWS"/>
<dbReference type="OrthoDB" id="72053at2759"/>
<dbReference type="PAN-GO" id="Q13087">
    <property type="GO annotations" value="3 GO annotations based on evolutionary models"/>
</dbReference>
<dbReference type="PhylomeDB" id="Q13087"/>
<dbReference type="TreeFam" id="TF106381"/>
<dbReference type="BRENDA" id="5.3.4.1">
    <property type="organism ID" value="2681"/>
</dbReference>
<dbReference type="PathwayCommons" id="Q13087"/>
<dbReference type="Reactome" id="R-HSA-9925561">
    <property type="pathway name" value="Developmental Lineage of Pancreatic Acinar Cells"/>
</dbReference>
<dbReference type="SignaLink" id="Q13087"/>
<dbReference type="BioGRID-ORCS" id="64714">
    <property type="hits" value="11 hits in 1138 CRISPR screens"/>
</dbReference>
<dbReference type="CD-CODE" id="91857CE7">
    <property type="entry name" value="Nucleolus"/>
</dbReference>
<dbReference type="GenomeRNAi" id="64714"/>
<dbReference type="Pharos" id="Q13087">
    <property type="development level" value="Tbio"/>
</dbReference>
<dbReference type="PRO" id="PR:Q13087"/>
<dbReference type="Proteomes" id="UP000005640">
    <property type="component" value="Chromosome 16"/>
</dbReference>
<dbReference type="RNAct" id="Q13087">
    <property type="molecule type" value="protein"/>
</dbReference>
<dbReference type="Bgee" id="ENSG00000185615">
    <property type="expression patterns" value="Expressed in body of pancreas and 115 other cell types or tissues"/>
</dbReference>
<dbReference type="ExpressionAtlas" id="Q13087">
    <property type="expression patterns" value="baseline and differential"/>
</dbReference>
<dbReference type="GO" id="GO:0005783">
    <property type="term" value="C:endoplasmic reticulum"/>
    <property type="evidence" value="ECO:0000318"/>
    <property type="project" value="GO_Central"/>
</dbReference>
<dbReference type="GO" id="GO:0005788">
    <property type="term" value="C:endoplasmic reticulum lumen"/>
    <property type="evidence" value="ECO:0007669"/>
    <property type="project" value="UniProtKB-SubCell"/>
</dbReference>
<dbReference type="GO" id="GO:0015036">
    <property type="term" value="F:disulfide oxidoreductase activity"/>
    <property type="evidence" value="ECO:0000304"/>
    <property type="project" value="ParkinsonsUK-UCL"/>
</dbReference>
<dbReference type="GO" id="GO:0003756">
    <property type="term" value="F:protein disulfide isomerase activity"/>
    <property type="evidence" value="ECO:0000304"/>
    <property type="project" value="ProtInc"/>
</dbReference>
<dbReference type="GO" id="GO:0015035">
    <property type="term" value="F:protein-disulfide reductase activity"/>
    <property type="evidence" value="ECO:0000314"/>
    <property type="project" value="UniProtKB"/>
</dbReference>
<dbReference type="GO" id="GO:0005496">
    <property type="term" value="F:steroid binding"/>
    <property type="evidence" value="ECO:0007669"/>
    <property type="project" value="UniProtKB-KW"/>
</dbReference>
<dbReference type="GO" id="GO:0070527">
    <property type="term" value="P:platelet aggregation"/>
    <property type="evidence" value="ECO:0007669"/>
    <property type="project" value="Ensembl"/>
</dbReference>
<dbReference type="GO" id="GO:0006457">
    <property type="term" value="P:protein folding"/>
    <property type="evidence" value="ECO:0000318"/>
    <property type="project" value="GO_Central"/>
</dbReference>
<dbReference type="GO" id="GO:0034975">
    <property type="term" value="P:protein folding in endoplasmic reticulum"/>
    <property type="evidence" value="ECO:0000304"/>
    <property type="project" value="ParkinsonsUK-UCL"/>
</dbReference>
<dbReference type="GO" id="GO:0006621">
    <property type="term" value="P:protein retention in ER lumen"/>
    <property type="evidence" value="ECO:0000304"/>
    <property type="project" value="ProtInc"/>
</dbReference>
<dbReference type="GO" id="GO:0034976">
    <property type="term" value="P:response to endoplasmic reticulum stress"/>
    <property type="evidence" value="ECO:0000318"/>
    <property type="project" value="GO_Central"/>
</dbReference>
<dbReference type="CDD" id="cd02961">
    <property type="entry name" value="PDI_a_family"/>
    <property type="match status" value="1"/>
</dbReference>
<dbReference type="CDD" id="cd02995">
    <property type="entry name" value="PDI_a_PDI_a'_C"/>
    <property type="match status" value="1"/>
</dbReference>
<dbReference type="CDD" id="cd02982">
    <property type="entry name" value="PDI_b'_family"/>
    <property type="match status" value="1"/>
</dbReference>
<dbReference type="CDD" id="cd02981">
    <property type="entry name" value="PDI_b_family"/>
    <property type="match status" value="1"/>
</dbReference>
<dbReference type="FunFam" id="3.40.30.10:FF:000203">
    <property type="entry name" value="Protein disulfide isomerase family A member 2"/>
    <property type="match status" value="1"/>
</dbReference>
<dbReference type="FunFam" id="3.40.30.10:FF:000023">
    <property type="entry name" value="Protein disulfide-isomerase"/>
    <property type="match status" value="1"/>
</dbReference>
<dbReference type="FunFam" id="3.40.30.10:FF:000027">
    <property type="entry name" value="protein disulfide-isomerase A2"/>
    <property type="match status" value="1"/>
</dbReference>
<dbReference type="FunFam" id="3.40.30.10:FF:000042">
    <property type="entry name" value="protein disulfide-isomerase A2"/>
    <property type="match status" value="1"/>
</dbReference>
<dbReference type="Gene3D" id="3.40.30.10">
    <property type="entry name" value="Glutaredoxin"/>
    <property type="match status" value="4"/>
</dbReference>
<dbReference type="InterPro" id="IPR005792">
    <property type="entry name" value="Prot_disulphide_isomerase"/>
</dbReference>
<dbReference type="InterPro" id="IPR036249">
    <property type="entry name" value="Thioredoxin-like_sf"/>
</dbReference>
<dbReference type="InterPro" id="IPR017937">
    <property type="entry name" value="Thioredoxin_CS"/>
</dbReference>
<dbReference type="InterPro" id="IPR013766">
    <property type="entry name" value="Thioredoxin_domain"/>
</dbReference>
<dbReference type="NCBIfam" id="TIGR01130">
    <property type="entry name" value="ER_PDI_fam"/>
    <property type="match status" value="1"/>
</dbReference>
<dbReference type="PANTHER" id="PTHR18929">
    <property type="entry name" value="PROTEIN DISULFIDE ISOMERASE"/>
    <property type="match status" value="1"/>
</dbReference>
<dbReference type="PANTHER" id="PTHR18929:SF93">
    <property type="entry name" value="PROTEIN DISULFIDE-ISOMERASE A2"/>
    <property type="match status" value="1"/>
</dbReference>
<dbReference type="Pfam" id="PF00085">
    <property type="entry name" value="Thioredoxin"/>
    <property type="match status" value="2"/>
</dbReference>
<dbReference type="Pfam" id="PF13848">
    <property type="entry name" value="Thioredoxin_6"/>
    <property type="match status" value="1"/>
</dbReference>
<dbReference type="PRINTS" id="PR00421">
    <property type="entry name" value="THIOREDOXIN"/>
</dbReference>
<dbReference type="SUPFAM" id="SSF52833">
    <property type="entry name" value="Thioredoxin-like"/>
    <property type="match status" value="4"/>
</dbReference>
<dbReference type="PROSITE" id="PS00014">
    <property type="entry name" value="ER_TARGET"/>
    <property type="match status" value="1"/>
</dbReference>
<dbReference type="PROSITE" id="PS00194">
    <property type="entry name" value="THIOREDOXIN_1"/>
    <property type="match status" value="2"/>
</dbReference>
<dbReference type="PROSITE" id="PS51352">
    <property type="entry name" value="THIOREDOXIN_2"/>
    <property type="match status" value="2"/>
</dbReference>